<reference key="1">
    <citation type="journal article" date="2004" name="J. Gen. Virol.">
        <title>Sequence analysis of the guanylyltransferase (VP3) of group A rotaviruses.</title>
        <authorList>
            <person name="Cook J.P."/>
            <person name="McCrae M.A."/>
        </authorList>
    </citation>
    <scope>NUCLEOTIDE SEQUENCE [GENOMIC RNA]</scope>
</reference>
<name>VP3_ROTP5</name>
<comment type="function">
    <text evidence="1">Multifunctional enzyme involved in mRNA capping. Catalyzes the formation of the 5' cap structure on the viral plus-strand transcripts. Specifically binds to GTP and displays guanylyltransferase and methyltransferase activities. Has affinity for ssRNA but not for dsRNA. Capping activity is non-specific and caps RNAs that initiate with either a G or an A residue. Together with VP1 polymerase, forms a VP1-VP3 complex positioned near the channels situated at each of the five-fold vertices of the core. Following infection, the outermost layer of the virus is lost, leaving a double-layered particle (DLP) made up of the core and VP6 shell. VP1 then catalyzes the transcription of fully conservative plus-strand genomic RNAs that are capped by VP3 and extruded through the DLP's channels into the cytoplasm where they function as mRNAs for translation of viral proteins. DLPs probably have an RNA triphosphatase activity as well, whereas open cores do not.</text>
</comment>
<comment type="function">
    <text evidence="1">Counteracts the host innate immune response thanks to its phosphodiesterase that degrades the 5'-triphosphorylated, 2'-5' linked adenylate oligomers produced by the host cell IFN-inducible 2',5'-oligoadenylate synthetase (OAS). The host RNaseL is therefore not activated.</text>
</comment>
<comment type="catalytic activity">
    <reaction evidence="1">
        <text>a 5'-end diphospho-ribonucleoside in mRNA + GTP + H(+) = a 5'-end (5'-triphosphoguanosine)-ribonucleoside in mRNA + diphosphate</text>
        <dbReference type="Rhea" id="RHEA:67012"/>
        <dbReference type="Rhea" id="RHEA-COMP:17165"/>
        <dbReference type="Rhea" id="RHEA-COMP:17166"/>
        <dbReference type="ChEBI" id="CHEBI:15378"/>
        <dbReference type="ChEBI" id="CHEBI:33019"/>
        <dbReference type="ChEBI" id="CHEBI:37565"/>
        <dbReference type="ChEBI" id="CHEBI:167616"/>
        <dbReference type="ChEBI" id="CHEBI:167617"/>
        <dbReference type="EC" id="2.7.7.50"/>
    </reaction>
</comment>
<comment type="catalytic activity">
    <reaction evidence="1">
        <text>a 5'-end (5'-triphosphoguanosine)-ribonucleoside in mRNA + S-adenosyl-L-methionine = a 5'-end (N(7)-methyl 5'-triphosphoguanosine)-ribonucleoside in mRNA + S-adenosyl-L-homocysteine</text>
        <dbReference type="Rhea" id="RHEA:67008"/>
        <dbReference type="Rhea" id="RHEA-COMP:17166"/>
        <dbReference type="Rhea" id="RHEA-COMP:17167"/>
        <dbReference type="ChEBI" id="CHEBI:57856"/>
        <dbReference type="ChEBI" id="CHEBI:59789"/>
        <dbReference type="ChEBI" id="CHEBI:156461"/>
        <dbReference type="ChEBI" id="CHEBI:167617"/>
        <dbReference type="EC" id="2.1.1.56"/>
    </reaction>
</comment>
<comment type="catalytic activity">
    <reaction evidence="1">
        <text>5'-triphosphoadenylyl-(2'-&gt;5')-adenylyl-(2'-&gt;5')-adenosine + 2 H2O = 2 AMP + ATP + 2 H(+)</text>
        <dbReference type="Rhea" id="RHEA:45964"/>
        <dbReference type="ChEBI" id="CHEBI:15377"/>
        <dbReference type="ChEBI" id="CHEBI:15378"/>
        <dbReference type="ChEBI" id="CHEBI:30616"/>
        <dbReference type="ChEBI" id="CHEBI:67143"/>
        <dbReference type="ChEBI" id="CHEBI:456215"/>
    </reaction>
</comment>
<comment type="subunit">
    <text evidence="1">Interacts with VP1. Interacts with VP2.</text>
</comment>
<comment type="subcellular location">
    <subcellularLocation>
        <location evidence="1">Virion</location>
    </subcellularLocation>
    <text evidence="1">Attached inside the inner capsid as a minor component. There are about 11 to 12 copies per virion.</text>
</comment>
<comment type="domain">
    <text evidence="1">Contains a bipartite N7-methyltransferase domain, a 2'-O-methyltransferase domain and a GTase/RTPase domain. The C-terminus contains a phosphodiesterase domain that degrades the 5'-triphosphorylated, 2'-5' linked adenylate oligomers produced by the host cell in response to IFN stimulation.</text>
</comment>
<comment type="similarity">
    <text evidence="1">Belongs to the rotavirus VP3 family.</text>
</comment>
<evidence type="ECO:0000255" key="1">
    <source>
        <dbReference type="HAMAP-Rule" id="MF_04128"/>
    </source>
</evidence>
<sequence>MKVLALRHSVAQVYADTQTYVHDDSKDEYENAFLISNLTTHNILYINYSVKTLKILNKSGIAAVEIQSPDELFALIRCNFTYDYENNTVYLHDYSYYTNNEIRTDQHWVTKTDIIDYLLPGWKLTYVGYNGKDTRGHYNFSFTCQNAATDDDIIIEYIYSSELDFQTFLLRKIKERMTTSLPIARLSNRVFRDKLFPSIVNIHKRVVNVGPRNESMFTFLNFPTIKQFSNGAYLVKHTIKLKQERWLGKRVSQFDIGQYKNMLNVVTTIYYYYNLHSSKPVIYMLGSAPSYWIYDIRQYSDFTFETWDPLDTPYSTTHHKELFFDKDVTKLKDNSILYIDIRTDRGNMDWKEWRKVVEQQTVSNLSIAYKYLSTGKAKVCCVKLTAMDLELPITAKLLHHPTTEIRSEFYAILDVWDISTIKRFVPKGVFYAFINNVTTENVFIQPPFKLRTLPNDYIVALYALSNDFNPRQDIINLINKQKQSLITVRINNTFKDEPKVNFKNIYDWTFLPTDFEIKDSIITSYDGCLGIFGLSTSLSSKPTGNNHLFIINGTDKYYKLDQYANHMGISRRSHQVRFSESATSYSGYIFRDLSNNNFNLIGTNIENSVSGHVYNALIYYRYNYAFDLKRWIYLHSIGEVTVEGGKYYEHAPIELIYACRSAKEFAALQDDLTVLRYANEIEGYINKVYSITYADDPNYFIGVRFDSIPYEYDVKVPHLTFGVLFISDNMIHDVITVLKKMKTELFKMEVSTSYTYMLSDGIHVANASGVLSTYFKLYNMFYRNHITFGQSRMFIPHITLSFSNKRTVRIENTRLKINSIYLRKIKGETVFDMSE</sequence>
<organism>
    <name type="scientific">Rotavirus A (strain RVA/Pig/United States/OSU/1977/G5P9[7])</name>
    <name type="common">RV-A</name>
    <name type="synonym">Rotavirus A (strain Ohio State University)</name>
    <dbReference type="NCBI Taxonomy" id="10915"/>
    <lineage>
        <taxon>Viruses</taxon>
        <taxon>Riboviria</taxon>
        <taxon>Orthornavirae</taxon>
        <taxon>Duplornaviricota</taxon>
        <taxon>Resentoviricetes</taxon>
        <taxon>Reovirales</taxon>
        <taxon>Sedoreoviridae</taxon>
        <taxon>Rotavirus</taxon>
        <taxon>Rotavirus A</taxon>
    </lineage>
</organism>
<feature type="chain" id="PRO_0000368088" description="Protein VP3">
    <location>
        <begin position="1"/>
        <end position="835"/>
    </location>
</feature>
<feature type="region of interest" description="N7-methyltransferase activity" evidence="1">
    <location>
        <begin position="171"/>
        <end position="245"/>
    </location>
</feature>
<feature type="region of interest" description="2'-O-methyltransferase activity" evidence="1">
    <location>
        <begin position="246"/>
        <end position="428"/>
    </location>
</feature>
<feature type="region of interest" description="N7-methyltransferase activity" evidence="1">
    <location>
        <begin position="429"/>
        <end position="555"/>
    </location>
</feature>
<feature type="region of interest" description="GTase/RTPase activity" evidence="1">
    <location>
        <begin position="556"/>
        <end position="692"/>
    </location>
</feature>
<feature type="region of interest" description="2'-5'-phosphodiesterase activity" evidence="1">
    <location>
        <begin position="693"/>
        <end position="835"/>
    </location>
</feature>
<feature type="active site" description="For 2'-5'-phosphodiesterase activity" evidence="1">
    <location>
        <position position="718"/>
    </location>
</feature>
<feature type="active site" description="For 2'-5'-phosphodiesterase activity" evidence="1">
    <location>
        <position position="720"/>
    </location>
</feature>
<feature type="active site" description="For 2'-5'-phosphodiesterase activity" evidence="1">
    <location>
        <position position="797"/>
    </location>
</feature>
<feature type="active site" description="For 2'-5'-phosphodiesterase activity" evidence="1">
    <location>
        <position position="799"/>
    </location>
</feature>
<keyword id="KW-0342">GTP-binding</keyword>
<keyword id="KW-0945">Host-virus interaction</keyword>
<keyword id="KW-0378">Hydrolase</keyword>
<keyword id="KW-1090">Inhibition of host innate immune response by virus</keyword>
<keyword id="KW-0489">Methyltransferase</keyword>
<keyword id="KW-0506">mRNA capping</keyword>
<keyword id="KW-0507">mRNA processing</keyword>
<keyword id="KW-0511">Multifunctional enzyme</keyword>
<keyword id="KW-0547">Nucleotide-binding</keyword>
<keyword id="KW-0548">Nucleotidyltransferase</keyword>
<keyword id="KW-0694">RNA-binding</keyword>
<keyword id="KW-0949">S-adenosyl-L-methionine</keyword>
<keyword id="KW-0808">Transferase</keyword>
<keyword id="KW-0899">Viral immunoevasion</keyword>
<keyword id="KW-0946">Virion</keyword>
<organismHost>
    <name type="scientific">Sus scrofa</name>
    <name type="common">Pig</name>
    <dbReference type="NCBI Taxonomy" id="9823"/>
</organismHost>
<accession>Q6WNV8</accession>
<dbReference type="EC" id="3.1.4.-" evidence="1"/>
<dbReference type="EC" id="2.7.7.50" evidence="1"/>
<dbReference type="EC" id="2.1.1.56" evidence="1"/>
<dbReference type="EMBL" id="AY277921">
    <property type="protein sequence ID" value="AAQ21048.1"/>
    <property type="molecule type" value="Genomic_RNA"/>
</dbReference>
<dbReference type="SMR" id="Q6WNV8"/>
<dbReference type="GO" id="GO:0019013">
    <property type="term" value="C:viral nucleocapsid"/>
    <property type="evidence" value="ECO:0007669"/>
    <property type="project" value="UniProtKB-UniRule"/>
</dbReference>
<dbReference type="GO" id="GO:0005525">
    <property type="term" value="F:GTP binding"/>
    <property type="evidence" value="ECO:0007669"/>
    <property type="project" value="UniProtKB-UniRule"/>
</dbReference>
<dbReference type="GO" id="GO:0016787">
    <property type="term" value="F:hydrolase activity"/>
    <property type="evidence" value="ECO:0007669"/>
    <property type="project" value="UniProtKB-KW"/>
</dbReference>
<dbReference type="GO" id="GO:0004482">
    <property type="term" value="F:mRNA 5'-cap (guanine-N7-)-methyltransferase activity"/>
    <property type="evidence" value="ECO:0007669"/>
    <property type="project" value="UniProtKB-UniRule"/>
</dbReference>
<dbReference type="GO" id="GO:0004484">
    <property type="term" value="F:mRNA guanylyltransferase activity"/>
    <property type="evidence" value="ECO:0007669"/>
    <property type="project" value="UniProtKB-UniRule"/>
</dbReference>
<dbReference type="GO" id="GO:0003723">
    <property type="term" value="F:RNA binding"/>
    <property type="evidence" value="ECO:0007669"/>
    <property type="project" value="UniProtKB-UniRule"/>
</dbReference>
<dbReference type="GO" id="GO:0052170">
    <property type="term" value="P:symbiont-mediated suppression of host innate immune response"/>
    <property type="evidence" value="ECO:0007669"/>
    <property type="project" value="UniProtKB-KW"/>
</dbReference>
<dbReference type="GO" id="GO:0016032">
    <property type="term" value="P:viral process"/>
    <property type="evidence" value="ECO:0007669"/>
    <property type="project" value="UniProtKB-UniRule"/>
</dbReference>
<dbReference type="CDD" id="cd20757">
    <property type="entry name" value="capping_2-OMTase_Rotavirus"/>
    <property type="match status" value="1"/>
</dbReference>
<dbReference type="HAMAP" id="MF_04124">
    <property type="entry name" value="Rota_VP3"/>
    <property type="match status" value="1"/>
</dbReference>
<dbReference type="HAMAP" id="MF_04128">
    <property type="entry name" value="Rota_VP3_A"/>
    <property type="match status" value="1"/>
</dbReference>
<dbReference type="InterPro" id="IPR011181">
    <property type="entry name" value="VP3_Rotav"/>
</dbReference>
<dbReference type="Pfam" id="PF06929">
    <property type="entry name" value="Rotavirus_VP3"/>
    <property type="match status" value="1"/>
</dbReference>
<dbReference type="PIRSF" id="PIRSF004015">
    <property type="entry name" value="LigT_rotavirus"/>
    <property type="match status" value="1"/>
</dbReference>
<dbReference type="PROSITE" id="PS51589">
    <property type="entry name" value="SAM_MT56_VP3"/>
    <property type="match status" value="1"/>
</dbReference>
<proteinExistence type="inferred from homology"/>
<protein>
    <recommendedName>
        <fullName evidence="1">Protein VP3</fullName>
    </recommendedName>
    <domain>
        <recommendedName>
            <fullName evidence="1">2',5'-phosphodiesterase</fullName>
            <ecNumber evidence="1">3.1.4.-</ecNumber>
        </recommendedName>
    </domain>
    <domain>
        <recommendedName>
            <fullName evidence="1">mRNA guanylyltransferase</fullName>
            <ecNumber evidence="1">2.7.7.50</ecNumber>
        </recommendedName>
    </domain>
    <domain>
        <recommendedName>
            <fullName evidence="1">mRNA (guanine-N(7))-methyltransferase</fullName>
            <ecNumber evidence="1">2.1.1.56</ecNumber>
        </recommendedName>
    </domain>
</protein>